<gene>
    <name type="primary">Chst3</name>
</gene>
<comment type="function">
    <text evidence="2 3 4">Sulfotransferase that utilizes 3'-phospho-5'-adenylyl sulfate (PAPS) as sulfonate donor to catalyze the transfer of sulfate to position 6 of the N-acetylgalactosamine (GalNAc) residue of chondroitin. Chondroitin sulfate constitutes the predominant proteoglycan present in cartilage and is distributed on the surfaces of many cells and extracellular matrices. Catalyzes with a lower efficiency the sulfation of Gal residues of keratan sulfate, another glycosaminoglycan (By similarity). Can also catalyze the sulfation of the Gal residues in sialyl N-acetyllactosamine (sialyl LacNAc) oligosaccharides (By similarity). May play a role in the maintenance of naive T-lymphocytes in the spleen (By similarity).</text>
</comment>
<comment type="catalytic activity">
    <reaction evidence="3">
        <text>chondroitin beta-D-glucuronate + n 3'-phosphoadenylyl sulfate = chondroitin 6'-sulfate + n adenosine 3',5'-bisphosphate + n H(+)</text>
        <dbReference type="Rhea" id="RHEA:11108"/>
        <dbReference type="Rhea" id="RHEA-COMP:9827"/>
        <dbReference type="Rhea" id="RHEA-COMP:9828"/>
        <dbReference type="ChEBI" id="CHEBI:15378"/>
        <dbReference type="ChEBI" id="CHEBI:57652"/>
        <dbReference type="ChEBI" id="CHEBI:58339"/>
        <dbReference type="ChEBI" id="CHEBI:58343"/>
        <dbReference type="ChEBI" id="CHEBI:62065"/>
        <dbReference type="EC" id="2.8.2.17"/>
    </reaction>
    <physiologicalReaction direction="left-to-right" evidence="3">
        <dbReference type="Rhea" id="RHEA:11109"/>
    </physiologicalReaction>
</comment>
<comment type="catalytic activity">
    <reaction evidence="3">
        <text>3'-phosphoadenylyl sulfate + keratan = adenosine 3',5'-bisphosphate + keratan 6'-sulfate.</text>
        <dbReference type="EC" id="2.8.2.21"/>
    </reaction>
</comment>
<comment type="subcellular location">
    <subcellularLocation>
        <location evidence="1">Golgi apparatus membrane</location>
        <topology evidence="1">Single-pass type II membrane protein</topology>
    </subcellularLocation>
</comment>
<comment type="PTM">
    <text evidence="4">N-glycosylated.</text>
</comment>
<comment type="similarity">
    <text evidence="6">Belongs to the sulfotransferase 1 family. Gal/GlcNAc/GalNAc subfamily.</text>
</comment>
<sequence length="474" mass="54018">MEKGLALPQDCRDLVHNLKIRGRYVLFLAFVVIVFIFIEKENKIISRVSDKLKQIPQFVADANSTDPALLLSENASLLSLSELDSTFSHLRSRLHNLSLQLGIAPAMEAQGQEAVAEKPSQQAGAGTRRHVLLMATTRTGSSFVGEFFNQQGNIFYLFEPLWHIERTVFFQQGGASAAGSALVYRDVLKQLLLCDLYVLEPFISPPPEDHLTQFLFRRGSSRSLCEDPVCTPFVKKVFEKYHCRNRHCGPLNVTLAAEACRRKDHMALKVVRIRQLEFLQPLAEDPRLDLRVIQLVRDPRAVLASRMVAFAGKYESWKKWLSEGQDQLSENEVQRLRGNCENIRLSAELGLRQPAWLRGRYMLVRYEDVARRPLQKAREMYRSAGIPLTPQVEDWIQKNTQAARDSSDVYSTQKNSSEQFEKWRFSIPFKLAQVVQAVCGPAMHLFGHKLAKDTASLTNRSISLLEERGTFWVT</sequence>
<reference key="1">
    <citation type="submission" date="2001-01" db="EMBL/GenBank/DDBJ databases">
        <title>Chondroitin 6-sulfotransferase of rat sciatic nerve.</title>
        <authorList>
            <person name="Li X."/>
            <person name="Kwok C.-F."/>
            <person name="Shum K.-Y."/>
        </authorList>
    </citation>
    <scope>NUCLEOTIDE SEQUENCE [MRNA]</scope>
    <source>
        <strain>Sprague-Dawley</strain>
    </source>
</reference>
<evidence type="ECO:0000250" key="1"/>
<evidence type="ECO:0000250" key="2">
    <source>
        <dbReference type="UniProtKB" id="O88199"/>
    </source>
</evidence>
<evidence type="ECO:0000250" key="3">
    <source>
        <dbReference type="UniProtKB" id="Q7LGC8"/>
    </source>
</evidence>
<evidence type="ECO:0000250" key="4">
    <source>
        <dbReference type="UniProtKB" id="Q92179"/>
    </source>
</evidence>
<evidence type="ECO:0000255" key="5"/>
<evidence type="ECO:0000305" key="6"/>
<protein>
    <recommendedName>
        <fullName evidence="6">Carbohydrate sulfotransferase 3</fullName>
        <ecNumber evidence="3">2.8.2.17</ecNumber>
        <ecNumber evidence="3">2.8.2.21</ecNumber>
    </recommendedName>
    <alternativeName>
        <fullName>Chondroitin 6-O-sulfotransferase 1</fullName>
        <shortName>C6ST-1</shortName>
    </alternativeName>
    <alternativeName>
        <fullName>Galactose/N-acetylglucosamine/N-acetylglucosamine 6-O-sulfotransferase 0</fullName>
        <shortName>GST-0</shortName>
    </alternativeName>
</protein>
<proteinExistence type="evidence at transcript level"/>
<dbReference type="EC" id="2.8.2.17" evidence="3"/>
<dbReference type="EC" id="2.8.2.21" evidence="3"/>
<dbReference type="EMBL" id="AF178689">
    <property type="protein sequence ID" value="AAD54386.2"/>
    <property type="molecule type" value="mRNA"/>
</dbReference>
<dbReference type="RefSeq" id="NP_445860.1">
    <property type="nucleotide sequence ID" value="NM_053408.1"/>
</dbReference>
<dbReference type="FunCoup" id="Q9QZL2">
    <property type="interactions" value="1556"/>
</dbReference>
<dbReference type="STRING" id="10116.ENSRNOP00000000697"/>
<dbReference type="GlyCosmos" id="Q9QZL2">
    <property type="glycosylation" value="6 sites, No reported glycans"/>
</dbReference>
<dbReference type="GlyGen" id="Q9QZL2">
    <property type="glycosylation" value="6 sites"/>
</dbReference>
<dbReference type="iPTMnet" id="Q9QZL2"/>
<dbReference type="PhosphoSitePlus" id="Q9QZL2"/>
<dbReference type="PaxDb" id="10116-ENSRNOP00000000697"/>
<dbReference type="GeneID" id="84468"/>
<dbReference type="KEGG" id="rno:84468"/>
<dbReference type="UCSC" id="RGD:620355">
    <property type="organism name" value="rat"/>
</dbReference>
<dbReference type="AGR" id="RGD:620355"/>
<dbReference type="CTD" id="9469"/>
<dbReference type="RGD" id="620355">
    <property type="gene designation" value="Chst3"/>
</dbReference>
<dbReference type="eggNOG" id="ENOG502QWEX">
    <property type="taxonomic scope" value="Eukaryota"/>
</dbReference>
<dbReference type="InParanoid" id="Q9QZL2"/>
<dbReference type="PhylomeDB" id="Q9QZL2"/>
<dbReference type="BRENDA" id="2.8.2.17">
    <property type="organism ID" value="5301"/>
</dbReference>
<dbReference type="Reactome" id="R-RNO-2022870">
    <property type="pathway name" value="Chondroitin sulfate biosynthesis"/>
</dbReference>
<dbReference type="PRO" id="PR:Q9QZL2"/>
<dbReference type="Proteomes" id="UP000002494">
    <property type="component" value="Unplaced"/>
</dbReference>
<dbReference type="GO" id="GO:0005794">
    <property type="term" value="C:Golgi apparatus"/>
    <property type="evidence" value="ECO:0000266"/>
    <property type="project" value="RGD"/>
</dbReference>
<dbReference type="GO" id="GO:0000139">
    <property type="term" value="C:Golgi membrane"/>
    <property type="evidence" value="ECO:0007669"/>
    <property type="project" value="UniProtKB-SubCell"/>
</dbReference>
<dbReference type="GO" id="GO:0008459">
    <property type="term" value="F:chondroitin 6-sulfotransferase activity"/>
    <property type="evidence" value="ECO:0000250"/>
    <property type="project" value="UniProtKB"/>
</dbReference>
<dbReference type="GO" id="GO:0001517">
    <property type="term" value="F:N-acetylglucosamine 6-O-sulfotransferase activity"/>
    <property type="evidence" value="ECO:0000318"/>
    <property type="project" value="GO_Central"/>
</dbReference>
<dbReference type="GO" id="GO:0050698">
    <property type="term" value="F:proteoglycan sulfotransferase activity"/>
    <property type="evidence" value="ECO:0000314"/>
    <property type="project" value="RGD"/>
</dbReference>
<dbReference type="GO" id="GO:0005975">
    <property type="term" value="P:carbohydrate metabolic process"/>
    <property type="evidence" value="ECO:0007669"/>
    <property type="project" value="InterPro"/>
</dbReference>
<dbReference type="GO" id="GO:0050650">
    <property type="term" value="P:chondroitin sulfate proteoglycan biosynthetic process"/>
    <property type="evidence" value="ECO:0000250"/>
    <property type="project" value="UniProtKB"/>
</dbReference>
<dbReference type="GO" id="GO:0006044">
    <property type="term" value="P:N-acetylglucosamine metabolic process"/>
    <property type="evidence" value="ECO:0000318"/>
    <property type="project" value="GO_Central"/>
</dbReference>
<dbReference type="GO" id="GO:0014012">
    <property type="term" value="P:peripheral nervous system axon regeneration"/>
    <property type="evidence" value="ECO:0000270"/>
    <property type="project" value="RGD"/>
</dbReference>
<dbReference type="GO" id="GO:0048678">
    <property type="term" value="P:response to axon injury"/>
    <property type="evidence" value="ECO:0000270"/>
    <property type="project" value="RGD"/>
</dbReference>
<dbReference type="GO" id="GO:0006790">
    <property type="term" value="P:sulfur compound metabolic process"/>
    <property type="evidence" value="ECO:0000266"/>
    <property type="project" value="RGD"/>
</dbReference>
<dbReference type="GO" id="GO:0043029">
    <property type="term" value="P:T cell homeostasis"/>
    <property type="evidence" value="ECO:0000266"/>
    <property type="project" value="RGD"/>
</dbReference>
<dbReference type="FunFam" id="3.40.50.300:FF:000938">
    <property type="entry name" value="Sulfotransferase"/>
    <property type="match status" value="1"/>
</dbReference>
<dbReference type="Gene3D" id="3.40.50.300">
    <property type="entry name" value="P-loop containing nucleotide triphosphate hydrolases"/>
    <property type="match status" value="1"/>
</dbReference>
<dbReference type="InterPro" id="IPR016469">
    <property type="entry name" value="Carbohydrate_sulfotransferase"/>
</dbReference>
<dbReference type="InterPro" id="IPR051135">
    <property type="entry name" value="Gal/GlcNAc/GalNAc_ST"/>
</dbReference>
<dbReference type="InterPro" id="IPR027417">
    <property type="entry name" value="P-loop_NTPase"/>
</dbReference>
<dbReference type="InterPro" id="IPR000863">
    <property type="entry name" value="Sulfotransferase_dom"/>
</dbReference>
<dbReference type="PANTHER" id="PTHR10704">
    <property type="entry name" value="CARBOHYDRATE SULFOTRANSFERASE"/>
    <property type="match status" value="1"/>
</dbReference>
<dbReference type="PANTHER" id="PTHR10704:SF60">
    <property type="entry name" value="CARBOHYDRATE SULFOTRANSFERASE 3"/>
    <property type="match status" value="1"/>
</dbReference>
<dbReference type="Pfam" id="PF00685">
    <property type="entry name" value="Sulfotransfer_1"/>
    <property type="match status" value="1"/>
</dbReference>
<dbReference type="PIRSF" id="PIRSF005883">
    <property type="entry name" value="Carbohydrate_sulfotransferase"/>
    <property type="match status" value="1"/>
</dbReference>
<dbReference type="SUPFAM" id="SSF52540">
    <property type="entry name" value="P-loop containing nucleoside triphosphate hydrolases"/>
    <property type="match status" value="1"/>
</dbReference>
<organism>
    <name type="scientific">Rattus norvegicus</name>
    <name type="common">Rat</name>
    <dbReference type="NCBI Taxonomy" id="10116"/>
    <lineage>
        <taxon>Eukaryota</taxon>
        <taxon>Metazoa</taxon>
        <taxon>Chordata</taxon>
        <taxon>Craniata</taxon>
        <taxon>Vertebrata</taxon>
        <taxon>Euteleostomi</taxon>
        <taxon>Mammalia</taxon>
        <taxon>Eutheria</taxon>
        <taxon>Euarchontoglires</taxon>
        <taxon>Glires</taxon>
        <taxon>Rodentia</taxon>
        <taxon>Myomorpha</taxon>
        <taxon>Muroidea</taxon>
        <taxon>Muridae</taxon>
        <taxon>Murinae</taxon>
        <taxon>Rattus</taxon>
    </lineage>
</organism>
<name>CHST3_RAT</name>
<accession>Q9QZL2</accession>
<feature type="chain" id="PRO_0000085190" description="Carbohydrate sulfotransferase 3">
    <location>
        <begin position="1"/>
        <end position="474"/>
    </location>
</feature>
<feature type="topological domain" description="Cytoplasmic" evidence="5">
    <location>
        <begin position="1"/>
        <end position="19"/>
    </location>
</feature>
<feature type="transmembrane region" description="Helical; Signal-anchor for type II membrane protein" evidence="5">
    <location>
        <begin position="20"/>
        <end position="38"/>
    </location>
</feature>
<feature type="topological domain" description="Lumenal" evidence="5">
    <location>
        <begin position="39"/>
        <end position="474"/>
    </location>
</feature>
<feature type="binding site" evidence="1">
    <location>
        <begin position="137"/>
        <end position="143"/>
    </location>
    <ligand>
        <name>3'-phosphoadenylyl sulfate</name>
        <dbReference type="ChEBI" id="CHEBI:58339"/>
    </ligand>
</feature>
<feature type="binding site" evidence="1">
    <location>
        <begin position="297"/>
        <end position="305"/>
    </location>
    <ligand>
        <name>3'-phosphoadenylyl sulfate</name>
        <dbReference type="ChEBI" id="CHEBI:58339"/>
    </ligand>
</feature>
<feature type="glycosylation site" description="N-linked (GlcNAc...) asparagine" evidence="5">
    <location>
        <position position="63"/>
    </location>
</feature>
<feature type="glycosylation site" description="N-linked (GlcNAc...) asparagine" evidence="5">
    <location>
        <position position="74"/>
    </location>
</feature>
<feature type="glycosylation site" description="N-linked (GlcNAc...) asparagine" evidence="5">
    <location>
        <position position="96"/>
    </location>
</feature>
<feature type="glycosylation site" description="N-linked (GlcNAc...) asparagine" evidence="5">
    <location>
        <position position="252"/>
    </location>
</feature>
<feature type="glycosylation site" description="N-linked (GlcNAc...) asparagine" evidence="5">
    <location>
        <position position="415"/>
    </location>
</feature>
<feature type="glycosylation site" description="N-linked (GlcNAc...) asparagine" evidence="5">
    <location>
        <position position="459"/>
    </location>
</feature>
<keyword id="KW-0119">Carbohydrate metabolism</keyword>
<keyword id="KW-0325">Glycoprotein</keyword>
<keyword id="KW-0333">Golgi apparatus</keyword>
<keyword id="KW-0472">Membrane</keyword>
<keyword id="KW-1185">Reference proteome</keyword>
<keyword id="KW-0735">Signal-anchor</keyword>
<keyword id="KW-0808">Transferase</keyword>
<keyword id="KW-0812">Transmembrane</keyword>
<keyword id="KW-1133">Transmembrane helix</keyword>